<keyword id="KW-0217">Developmental protein</keyword>
<keyword id="KW-0238">DNA-binding</keyword>
<keyword id="KW-0302">Gap protein</keyword>
<keyword id="KW-0479">Metal-binding</keyword>
<keyword id="KW-0539">Nucleus</keyword>
<keyword id="KW-0677">Repeat</keyword>
<keyword id="KW-0862">Zinc</keyword>
<keyword id="KW-0863">Zinc-finger</keyword>
<reference key="1">
    <citation type="journal article" date="1995" name="Development">
        <title>Conserved and divergent expression aspects of the Drosophila segmentation gene hunchback in the short germ band embryo of the flour beetle Tribolium.</title>
        <authorList>
            <person name="Wolff C."/>
            <person name="Sommer R."/>
            <person name="Schroeder R."/>
            <person name="Glaser G."/>
            <person name="Tautz D."/>
        </authorList>
    </citation>
    <scope>NUCLEOTIDE SEQUENCE [GENOMIC DNA]</scope>
</reference>
<reference key="2">
    <citation type="journal article" date="1992" name="Proc. Natl. Acad. Sci. U.S.A.">
        <title>Evolutionary conservation pattern of zinc-finger domains of Drosophila segmentation genes.</title>
        <authorList>
            <person name="Sommer R.J."/>
            <person name="Retzlaff M."/>
            <person name="Goerlich K."/>
            <person name="Sander K."/>
            <person name="Tautz D."/>
        </authorList>
    </citation>
    <scope>NUCLEOTIDE SEQUENCE [GENOMIC DNA] OF 243-311</scope>
</reference>
<accession>Q01791</accession>
<proteinExistence type="inferred from homology"/>
<gene>
    <name type="primary">hb</name>
</gene>
<protein>
    <recommendedName>
        <fullName>Protein hunchback</fullName>
    </recommendedName>
</protein>
<organism>
    <name type="scientific">Tribolium castaneum</name>
    <name type="common">Red flour beetle</name>
    <dbReference type="NCBI Taxonomy" id="7070"/>
    <lineage>
        <taxon>Eukaryota</taxon>
        <taxon>Metazoa</taxon>
        <taxon>Ecdysozoa</taxon>
        <taxon>Arthropoda</taxon>
        <taxon>Hexapoda</taxon>
        <taxon>Insecta</taxon>
        <taxon>Pterygota</taxon>
        <taxon>Neoptera</taxon>
        <taxon>Endopterygota</taxon>
        <taxon>Coleoptera</taxon>
        <taxon>Polyphaga</taxon>
        <taxon>Cucujiformia</taxon>
        <taxon>Tenebrionidae</taxon>
        <taxon>Tenebrionidae incertae sedis</taxon>
        <taxon>Tribolium</taxon>
    </lineage>
</organism>
<evidence type="ECO:0000255" key="1">
    <source>
        <dbReference type="PROSITE-ProRule" id="PRU00042"/>
    </source>
</evidence>
<evidence type="ECO:0000256" key="2">
    <source>
        <dbReference type="SAM" id="MobiDB-lite"/>
    </source>
</evidence>
<evidence type="ECO:0000305" key="3"/>
<name>HUNB_TRICA</name>
<feature type="chain" id="PRO_0000046983" description="Protein hunchback">
    <location>
        <begin position="1"/>
        <end position="524"/>
    </location>
</feature>
<feature type="zinc finger region" description="C2H2-type 1" evidence="1">
    <location>
        <begin position="202"/>
        <end position="224"/>
    </location>
</feature>
<feature type="zinc finger region" description="C2H2-type 2" evidence="1">
    <location>
        <begin position="231"/>
        <end position="253"/>
    </location>
</feature>
<feature type="zinc finger region" description="C2H2-type 3" evidence="1">
    <location>
        <begin position="259"/>
        <end position="281"/>
    </location>
</feature>
<feature type="zinc finger region" description="C2H2-type 4" evidence="1">
    <location>
        <begin position="298"/>
        <end position="311"/>
    </location>
</feature>
<feature type="zinc finger region" description="C2H2-type 5" evidence="1">
    <location>
        <begin position="471"/>
        <end position="493"/>
    </location>
</feature>
<feature type="zinc finger region" description="C2H2-type 6" evidence="1">
    <location>
        <begin position="499"/>
        <end position="523"/>
    </location>
</feature>
<feature type="region of interest" description="Disordered" evidence="2">
    <location>
        <begin position="42"/>
        <end position="86"/>
    </location>
</feature>
<feature type="region of interest" description="Disordered" evidence="2">
    <location>
        <begin position="101"/>
        <end position="187"/>
    </location>
</feature>
<feature type="region of interest" description="Disordered" evidence="2">
    <location>
        <begin position="402"/>
        <end position="442"/>
    </location>
</feature>
<feature type="compositionally biased region" description="Low complexity" evidence="2">
    <location>
        <begin position="59"/>
        <end position="75"/>
    </location>
</feature>
<feature type="compositionally biased region" description="Polar residues" evidence="2">
    <location>
        <begin position="76"/>
        <end position="86"/>
    </location>
</feature>
<feature type="compositionally biased region" description="Basic and acidic residues" evidence="2">
    <location>
        <begin position="118"/>
        <end position="127"/>
    </location>
</feature>
<feature type="compositionally biased region" description="Basic and acidic residues" evidence="2">
    <location>
        <begin position="138"/>
        <end position="154"/>
    </location>
</feature>
<feature type="compositionally biased region" description="Basic and acidic residues" evidence="2">
    <location>
        <begin position="164"/>
        <end position="178"/>
    </location>
</feature>
<sequence>MIDKDMNSACMRGGSVRTLNNYQQVMEPRSPHTAWQFGVSQIVKREPMDEDKNDSGVTSGSDFHSSSPSSDTSQDLQHSYQSPQTQPARFYSTPIVPHFAYNHNPLTPPNSEPLVSPKSEKEEKDMETTLTPCASPNRKPDDNQDHLRRLEMSLEKSGLFSSKTSEHSVDELSGKSDNDAEEYDEQSLRVPKVNSHGKIKTFKCKQCDFVAITKLEQWNHSKVHIREDKRLTCPKCPFITEYKHHLEYHLRNHAGSKPFQCNKCDYTCVNKSMLNSHMKSHSNVYRYSCRDCSYATKYCHSLKIHLRRYGHTPNVVLDEEGNPCPDIIIDVHGTRRGPKIKTQPKAEEAKPETLPFLNLQQQLPFPGYPFFGGFPNAQLLQQLIRERQLAVGGSQEESRVLDLSKPGCSYTGEQKSRRKGPAFKVDPTQVESEEEDEETSTTVFSNVEVVQEEAKKEESDSNNNNNKEEGNSCQYCNIAFGDAVLYTIHMGYHGFHNPFTCNMCGVECSDKVSFFLHIARVSHS</sequence>
<dbReference type="EMBL" id="X91618">
    <property type="protein sequence ID" value="CAA62821.1"/>
    <property type="molecule type" value="Genomic_DNA"/>
</dbReference>
<dbReference type="EMBL" id="L01615">
    <property type="protein sequence ID" value="AAA30095.1"/>
    <property type="molecule type" value="Genomic_DNA"/>
</dbReference>
<dbReference type="RefSeq" id="NP_001038093.1">
    <property type="nucleotide sequence ID" value="NM_001044628.1"/>
</dbReference>
<dbReference type="GeneID" id="656763"/>
<dbReference type="KEGG" id="tca:656763"/>
<dbReference type="CTD" id="15120"/>
<dbReference type="eggNOG" id="KOG1721">
    <property type="taxonomic scope" value="Eukaryota"/>
</dbReference>
<dbReference type="HOGENOM" id="CLU_021336_0_0_1"/>
<dbReference type="OrthoDB" id="10015593at2759"/>
<dbReference type="GO" id="GO:0005634">
    <property type="term" value="C:nucleus"/>
    <property type="evidence" value="ECO:0007669"/>
    <property type="project" value="UniProtKB-SubCell"/>
</dbReference>
<dbReference type="GO" id="GO:0003677">
    <property type="term" value="F:DNA binding"/>
    <property type="evidence" value="ECO:0007669"/>
    <property type="project" value="UniProtKB-KW"/>
</dbReference>
<dbReference type="GO" id="GO:0008270">
    <property type="term" value="F:zinc ion binding"/>
    <property type="evidence" value="ECO:0007669"/>
    <property type="project" value="UniProtKB-KW"/>
</dbReference>
<dbReference type="GO" id="GO:0035282">
    <property type="term" value="P:segmentation"/>
    <property type="evidence" value="ECO:0007669"/>
    <property type="project" value="UniProtKB-KW"/>
</dbReference>
<dbReference type="FunFam" id="3.30.160.60:FF:001301">
    <property type="entry name" value="Blast:Protein hunchback"/>
    <property type="match status" value="1"/>
</dbReference>
<dbReference type="FunFam" id="3.30.160.60:FF:001482">
    <property type="entry name" value="Hunchback"/>
    <property type="match status" value="1"/>
</dbReference>
<dbReference type="Gene3D" id="3.30.160.60">
    <property type="entry name" value="Classic Zinc Finger"/>
    <property type="match status" value="3"/>
</dbReference>
<dbReference type="InterPro" id="IPR050688">
    <property type="entry name" value="Zinc_finger/UBP_domain"/>
</dbReference>
<dbReference type="InterPro" id="IPR036236">
    <property type="entry name" value="Znf_C2H2_sf"/>
</dbReference>
<dbReference type="InterPro" id="IPR013087">
    <property type="entry name" value="Znf_C2H2_type"/>
</dbReference>
<dbReference type="PANTHER" id="PTHR24403">
    <property type="entry name" value="ZINC FINGER PROTEIN"/>
    <property type="match status" value="1"/>
</dbReference>
<dbReference type="PANTHER" id="PTHR24403:SF43">
    <property type="entry name" value="ZINC FINGER PROTEIN 64"/>
    <property type="match status" value="1"/>
</dbReference>
<dbReference type="Pfam" id="PF00096">
    <property type="entry name" value="zf-C2H2"/>
    <property type="match status" value="1"/>
</dbReference>
<dbReference type="SMART" id="SM00355">
    <property type="entry name" value="ZnF_C2H2"/>
    <property type="match status" value="6"/>
</dbReference>
<dbReference type="SUPFAM" id="SSF57667">
    <property type="entry name" value="beta-beta-alpha zinc fingers"/>
    <property type="match status" value="3"/>
</dbReference>
<dbReference type="PROSITE" id="PS00028">
    <property type="entry name" value="ZINC_FINGER_C2H2_1"/>
    <property type="match status" value="3"/>
</dbReference>
<dbReference type="PROSITE" id="PS50157">
    <property type="entry name" value="ZINC_FINGER_C2H2_2"/>
    <property type="match status" value="2"/>
</dbReference>
<comment type="function">
    <text>Gap class segmentation protein that controls development of head structures.</text>
</comment>
<comment type="subcellular location">
    <subcellularLocation>
        <location evidence="3">Nucleus</location>
    </subcellularLocation>
</comment>
<comment type="similarity">
    <text evidence="3">Belongs to the hunchback C2H2-type zinc-finger protein family.</text>
</comment>